<protein>
    <recommendedName>
        <fullName evidence="1">ATP synthase subunit b</fullName>
    </recommendedName>
    <alternativeName>
        <fullName evidence="1">ATP synthase F(0) sector subunit b</fullName>
    </alternativeName>
    <alternativeName>
        <fullName evidence="1">ATPase subunit I</fullName>
    </alternativeName>
    <alternativeName>
        <fullName evidence="1">F-type ATPase subunit b</fullName>
        <shortName evidence="1">F-ATPase subunit b</shortName>
    </alternativeName>
</protein>
<comment type="function">
    <text evidence="1">F(1)F(0) ATP synthase produces ATP from ADP in the presence of a proton or sodium gradient. F-type ATPases consist of two structural domains, F(1) containing the extramembraneous catalytic core and F(0) containing the membrane proton channel, linked together by a central stalk and a peripheral stalk. During catalysis, ATP synthesis in the catalytic domain of F(1) is coupled via a rotary mechanism of the central stalk subunits to proton translocation.</text>
</comment>
<comment type="function">
    <text evidence="1">Component of the F(0) channel, it forms part of the peripheral stalk, linking F(1) to F(0).</text>
</comment>
<comment type="subunit">
    <text evidence="1">F-type ATPases have 2 components, F(1) - the catalytic core - and F(0) - the membrane proton channel. F(1) has five subunits: alpha(3), beta(3), gamma(1), delta(1), epsilon(1). F(0) has three main subunits: a(1), b(2) and c(10-14). The alpha and beta chains form an alternating ring which encloses part of the gamma chain. F(1) is attached to F(0) by a central stalk formed by the gamma and epsilon chains, while a peripheral stalk is formed by the delta and b chains.</text>
</comment>
<comment type="subcellular location">
    <subcellularLocation>
        <location evidence="1">Cell membrane</location>
        <topology evidence="1">Single-pass membrane protein</topology>
    </subcellularLocation>
</comment>
<comment type="similarity">
    <text evidence="1">Belongs to the ATPase B chain family.</text>
</comment>
<feature type="chain" id="PRO_0000368456" description="ATP synthase subunit b">
    <location>
        <begin position="1"/>
        <end position="164"/>
    </location>
</feature>
<feature type="transmembrane region" description="Helical" evidence="1">
    <location>
        <begin position="4"/>
        <end position="24"/>
    </location>
</feature>
<keyword id="KW-0066">ATP synthesis</keyword>
<keyword id="KW-1003">Cell membrane</keyword>
<keyword id="KW-0138">CF(0)</keyword>
<keyword id="KW-0375">Hydrogen ion transport</keyword>
<keyword id="KW-0406">Ion transport</keyword>
<keyword id="KW-0472">Membrane</keyword>
<keyword id="KW-1185">Reference proteome</keyword>
<keyword id="KW-0812">Transmembrane</keyword>
<keyword id="KW-1133">Transmembrane helix</keyword>
<keyword id="KW-0813">Transport</keyword>
<proteinExistence type="inferred from homology"/>
<accession>Q24MN7</accession>
<reference key="1">
    <citation type="journal article" date="2006" name="J. Bacteriol.">
        <title>Complete genome sequence of the dehalorespiring bacterium Desulfitobacterium hafniense Y51 and comparison with Dehalococcoides ethenogenes 195.</title>
        <authorList>
            <person name="Nonaka H."/>
            <person name="Keresztes G."/>
            <person name="Shinoda Y."/>
            <person name="Ikenaga Y."/>
            <person name="Abe M."/>
            <person name="Naito K."/>
            <person name="Inatomi K."/>
            <person name="Furukawa K."/>
            <person name="Inui M."/>
            <person name="Yukawa H."/>
        </authorList>
    </citation>
    <scope>NUCLEOTIDE SEQUENCE [LARGE SCALE GENOMIC DNA]</scope>
    <source>
        <strain>Y51</strain>
    </source>
</reference>
<evidence type="ECO:0000255" key="1">
    <source>
        <dbReference type="HAMAP-Rule" id="MF_01398"/>
    </source>
</evidence>
<name>ATPF_DESHY</name>
<organism>
    <name type="scientific">Desulfitobacterium hafniense (strain Y51)</name>
    <dbReference type="NCBI Taxonomy" id="138119"/>
    <lineage>
        <taxon>Bacteria</taxon>
        <taxon>Bacillati</taxon>
        <taxon>Bacillota</taxon>
        <taxon>Clostridia</taxon>
        <taxon>Eubacteriales</taxon>
        <taxon>Desulfitobacteriaceae</taxon>
        <taxon>Desulfitobacterium</taxon>
    </lineage>
</organism>
<sequence>MNPIHFDLTLVVQVLSFLLLVYILRRFAWNPLINMMEERRSQIEANIANAEKERLQAEQIKREYQEEMRKARQEAQEVIAKATKLSEQRAAEILAAAHGEAEKIKQSALADIERERDRAIAQVQAQVADLSVAVAEKIIRKNLDVRGQEDMIEQFIQEVGELPC</sequence>
<gene>
    <name evidence="1" type="primary">atpF</name>
    <name type="ordered locus">DSY4916</name>
</gene>
<dbReference type="EMBL" id="AP008230">
    <property type="protein sequence ID" value="BAE86705.1"/>
    <property type="molecule type" value="Genomic_DNA"/>
</dbReference>
<dbReference type="RefSeq" id="WP_011462233.1">
    <property type="nucleotide sequence ID" value="NC_007907.1"/>
</dbReference>
<dbReference type="SMR" id="Q24MN7"/>
<dbReference type="STRING" id="138119.DSY4916"/>
<dbReference type="KEGG" id="dsy:DSY4916"/>
<dbReference type="eggNOG" id="COG0711">
    <property type="taxonomic scope" value="Bacteria"/>
</dbReference>
<dbReference type="HOGENOM" id="CLU_079215_4_1_9"/>
<dbReference type="Proteomes" id="UP000001946">
    <property type="component" value="Chromosome"/>
</dbReference>
<dbReference type="GO" id="GO:0005886">
    <property type="term" value="C:plasma membrane"/>
    <property type="evidence" value="ECO:0007669"/>
    <property type="project" value="UniProtKB-SubCell"/>
</dbReference>
<dbReference type="GO" id="GO:0045259">
    <property type="term" value="C:proton-transporting ATP synthase complex"/>
    <property type="evidence" value="ECO:0007669"/>
    <property type="project" value="UniProtKB-KW"/>
</dbReference>
<dbReference type="GO" id="GO:0046933">
    <property type="term" value="F:proton-transporting ATP synthase activity, rotational mechanism"/>
    <property type="evidence" value="ECO:0007669"/>
    <property type="project" value="UniProtKB-UniRule"/>
</dbReference>
<dbReference type="GO" id="GO:0046961">
    <property type="term" value="F:proton-transporting ATPase activity, rotational mechanism"/>
    <property type="evidence" value="ECO:0007669"/>
    <property type="project" value="TreeGrafter"/>
</dbReference>
<dbReference type="CDD" id="cd06503">
    <property type="entry name" value="ATP-synt_Fo_b"/>
    <property type="match status" value="1"/>
</dbReference>
<dbReference type="Gene3D" id="6.10.250.1580">
    <property type="match status" value="1"/>
</dbReference>
<dbReference type="HAMAP" id="MF_01398">
    <property type="entry name" value="ATP_synth_b_bprime"/>
    <property type="match status" value="1"/>
</dbReference>
<dbReference type="InterPro" id="IPR028987">
    <property type="entry name" value="ATP_synth_B-like_membr_sf"/>
</dbReference>
<dbReference type="InterPro" id="IPR002146">
    <property type="entry name" value="ATP_synth_b/b'su_bac/chlpt"/>
</dbReference>
<dbReference type="InterPro" id="IPR005864">
    <property type="entry name" value="ATP_synth_F0_bsu_bac"/>
</dbReference>
<dbReference type="InterPro" id="IPR050059">
    <property type="entry name" value="ATP_synthase_B_chain"/>
</dbReference>
<dbReference type="NCBIfam" id="TIGR01144">
    <property type="entry name" value="ATP_synt_b"/>
    <property type="match status" value="1"/>
</dbReference>
<dbReference type="PANTHER" id="PTHR33445:SF1">
    <property type="entry name" value="ATP SYNTHASE SUBUNIT B"/>
    <property type="match status" value="1"/>
</dbReference>
<dbReference type="PANTHER" id="PTHR33445">
    <property type="entry name" value="ATP SYNTHASE SUBUNIT B', CHLOROPLASTIC"/>
    <property type="match status" value="1"/>
</dbReference>
<dbReference type="Pfam" id="PF00430">
    <property type="entry name" value="ATP-synt_B"/>
    <property type="match status" value="1"/>
</dbReference>
<dbReference type="SUPFAM" id="SSF81573">
    <property type="entry name" value="F1F0 ATP synthase subunit B, membrane domain"/>
    <property type="match status" value="1"/>
</dbReference>